<sequence>MKLKIITVGKLKEKYLKEGVAEYQKRLNRFSKIETIELADEKTPDKASISENQRILDIEGERILSKIGERDYVIGLAIEGKQLPSESFSHLIDQKMISGYSTITFVIGGSLGLSQKVKKRADYLMSFGLLTLPHQLMKLVLMEQIYRAFMIRQGTPYHK</sequence>
<evidence type="ECO:0000255" key="1">
    <source>
        <dbReference type="HAMAP-Rule" id="MF_00658"/>
    </source>
</evidence>
<dbReference type="EC" id="2.1.1.177" evidence="1"/>
<dbReference type="EMBL" id="AE009948">
    <property type="protein sequence ID" value="AAN01031.1"/>
    <property type="molecule type" value="Genomic_DNA"/>
</dbReference>
<dbReference type="RefSeq" id="NP_689158.1">
    <property type="nucleotide sequence ID" value="NC_004116.1"/>
</dbReference>
<dbReference type="RefSeq" id="WP_000768335.1">
    <property type="nucleotide sequence ID" value="NC_004116.1"/>
</dbReference>
<dbReference type="SMR" id="P67523"/>
<dbReference type="STRING" id="208435.SAG2173"/>
<dbReference type="GeneID" id="66886911"/>
<dbReference type="KEGG" id="sag:SAG2173"/>
<dbReference type="PATRIC" id="fig|208435.3.peg.2176"/>
<dbReference type="HOGENOM" id="CLU_100552_0_0_9"/>
<dbReference type="OrthoDB" id="9806643at2"/>
<dbReference type="Proteomes" id="UP000000821">
    <property type="component" value="Chromosome"/>
</dbReference>
<dbReference type="GO" id="GO:0005737">
    <property type="term" value="C:cytoplasm"/>
    <property type="evidence" value="ECO:0007669"/>
    <property type="project" value="UniProtKB-SubCell"/>
</dbReference>
<dbReference type="GO" id="GO:0070038">
    <property type="term" value="F:rRNA (pseudouridine-N3-)-methyltransferase activity"/>
    <property type="evidence" value="ECO:0007669"/>
    <property type="project" value="UniProtKB-UniRule"/>
</dbReference>
<dbReference type="CDD" id="cd18081">
    <property type="entry name" value="RlmH-like"/>
    <property type="match status" value="1"/>
</dbReference>
<dbReference type="Gene3D" id="3.40.1280.10">
    <property type="match status" value="1"/>
</dbReference>
<dbReference type="HAMAP" id="MF_00658">
    <property type="entry name" value="23SrRNA_methyltr_H"/>
    <property type="match status" value="1"/>
</dbReference>
<dbReference type="InterPro" id="IPR029028">
    <property type="entry name" value="Alpha/beta_knot_MTases"/>
</dbReference>
<dbReference type="InterPro" id="IPR003742">
    <property type="entry name" value="RlmH-like"/>
</dbReference>
<dbReference type="InterPro" id="IPR029026">
    <property type="entry name" value="tRNA_m1G_MTases_N"/>
</dbReference>
<dbReference type="NCBIfam" id="NF000985">
    <property type="entry name" value="PRK00103.1-3"/>
    <property type="match status" value="1"/>
</dbReference>
<dbReference type="NCBIfam" id="TIGR00246">
    <property type="entry name" value="tRNA_RlmH_YbeA"/>
    <property type="match status" value="1"/>
</dbReference>
<dbReference type="PANTHER" id="PTHR33603">
    <property type="entry name" value="METHYLTRANSFERASE"/>
    <property type="match status" value="1"/>
</dbReference>
<dbReference type="PANTHER" id="PTHR33603:SF1">
    <property type="entry name" value="RIBOSOMAL RNA LARGE SUBUNIT METHYLTRANSFERASE H"/>
    <property type="match status" value="1"/>
</dbReference>
<dbReference type="Pfam" id="PF02590">
    <property type="entry name" value="SPOUT_MTase"/>
    <property type="match status" value="1"/>
</dbReference>
<dbReference type="PIRSF" id="PIRSF004505">
    <property type="entry name" value="MT_bac"/>
    <property type="match status" value="1"/>
</dbReference>
<dbReference type="SUPFAM" id="SSF75217">
    <property type="entry name" value="alpha/beta knot"/>
    <property type="match status" value="1"/>
</dbReference>
<accession>P67523</accession>
<accession>Q8DWP2</accession>
<accession>Q8E2J0</accession>
<protein>
    <recommendedName>
        <fullName evidence="1">Ribosomal RNA large subunit methyltransferase H</fullName>
        <ecNumber evidence="1">2.1.1.177</ecNumber>
    </recommendedName>
    <alternativeName>
        <fullName evidence="1">23S rRNA (pseudouridine1915-N3)-methyltransferase</fullName>
    </alternativeName>
    <alternativeName>
        <fullName evidence="1">23S rRNA m3Psi1915 methyltransferase</fullName>
    </alternativeName>
    <alternativeName>
        <fullName evidence="1">rRNA (pseudouridine-N3-)-methyltransferase RlmH</fullName>
    </alternativeName>
</protein>
<comment type="function">
    <text evidence="1">Specifically methylates the pseudouridine at position 1915 (m3Psi1915) in 23S rRNA.</text>
</comment>
<comment type="catalytic activity">
    <reaction evidence="1">
        <text>pseudouridine(1915) in 23S rRNA + S-adenosyl-L-methionine = N(3)-methylpseudouridine(1915) in 23S rRNA + S-adenosyl-L-homocysteine + H(+)</text>
        <dbReference type="Rhea" id="RHEA:42752"/>
        <dbReference type="Rhea" id="RHEA-COMP:10221"/>
        <dbReference type="Rhea" id="RHEA-COMP:10222"/>
        <dbReference type="ChEBI" id="CHEBI:15378"/>
        <dbReference type="ChEBI" id="CHEBI:57856"/>
        <dbReference type="ChEBI" id="CHEBI:59789"/>
        <dbReference type="ChEBI" id="CHEBI:65314"/>
        <dbReference type="ChEBI" id="CHEBI:74486"/>
        <dbReference type="EC" id="2.1.1.177"/>
    </reaction>
</comment>
<comment type="subunit">
    <text evidence="1">Homodimer.</text>
</comment>
<comment type="subcellular location">
    <subcellularLocation>
        <location evidence="1">Cytoplasm</location>
    </subcellularLocation>
</comment>
<comment type="similarity">
    <text evidence="1">Belongs to the RNA methyltransferase RlmH family.</text>
</comment>
<keyword id="KW-0963">Cytoplasm</keyword>
<keyword id="KW-0489">Methyltransferase</keyword>
<keyword id="KW-1185">Reference proteome</keyword>
<keyword id="KW-0698">rRNA processing</keyword>
<keyword id="KW-0949">S-adenosyl-L-methionine</keyword>
<keyword id="KW-0808">Transferase</keyword>
<organism>
    <name type="scientific">Streptococcus agalactiae serotype V (strain ATCC BAA-611 / 2603 V/R)</name>
    <dbReference type="NCBI Taxonomy" id="208435"/>
    <lineage>
        <taxon>Bacteria</taxon>
        <taxon>Bacillati</taxon>
        <taxon>Bacillota</taxon>
        <taxon>Bacilli</taxon>
        <taxon>Lactobacillales</taxon>
        <taxon>Streptococcaceae</taxon>
        <taxon>Streptococcus</taxon>
    </lineage>
</organism>
<proteinExistence type="inferred from homology"/>
<reference key="1">
    <citation type="journal article" date="2002" name="Proc. Natl. Acad. Sci. U.S.A.">
        <title>Complete genome sequence and comparative genomic analysis of an emerging human pathogen, serotype V Streptococcus agalactiae.</title>
        <authorList>
            <person name="Tettelin H."/>
            <person name="Masignani V."/>
            <person name="Cieslewicz M.J."/>
            <person name="Eisen J.A."/>
            <person name="Peterson S.N."/>
            <person name="Wessels M.R."/>
            <person name="Paulsen I.T."/>
            <person name="Nelson K.E."/>
            <person name="Margarit I."/>
            <person name="Read T.D."/>
            <person name="Madoff L.C."/>
            <person name="Wolf A.M."/>
            <person name="Beanan M.J."/>
            <person name="Brinkac L.M."/>
            <person name="Daugherty S.C."/>
            <person name="DeBoy R.T."/>
            <person name="Durkin A.S."/>
            <person name="Kolonay J.F."/>
            <person name="Madupu R."/>
            <person name="Lewis M.R."/>
            <person name="Radune D."/>
            <person name="Fedorova N.B."/>
            <person name="Scanlan D."/>
            <person name="Khouri H.M."/>
            <person name="Mulligan S."/>
            <person name="Carty H.A."/>
            <person name="Cline R.T."/>
            <person name="Van Aken S.E."/>
            <person name="Gill J."/>
            <person name="Scarselli M."/>
            <person name="Mora M."/>
            <person name="Iacobini E.T."/>
            <person name="Brettoni C."/>
            <person name="Galli G."/>
            <person name="Mariani M."/>
            <person name="Vegni F."/>
            <person name="Maione D."/>
            <person name="Rinaudo D."/>
            <person name="Rappuoli R."/>
            <person name="Telford J.L."/>
            <person name="Kasper D.L."/>
            <person name="Grandi G."/>
            <person name="Fraser C.M."/>
        </authorList>
    </citation>
    <scope>NUCLEOTIDE SEQUENCE [LARGE SCALE GENOMIC DNA]</scope>
    <source>
        <strain>ATCC BAA-611 / 2603 V/R</strain>
    </source>
</reference>
<feature type="chain" id="PRO_0000198188" description="Ribosomal RNA large subunit methyltransferase H">
    <location>
        <begin position="1"/>
        <end position="159"/>
    </location>
</feature>
<feature type="binding site" evidence="1">
    <location>
        <position position="76"/>
    </location>
    <ligand>
        <name>S-adenosyl-L-methionine</name>
        <dbReference type="ChEBI" id="CHEBI:59789"/>
    </ligand>
</feature>
<feature type="binding site" evidence="1">
    <location>
        <position position="108"/>
    </location>
    <ligand>
        <name>S-adenosyl-L-methionine</name>
        <dbReference type="ChEBI" id="CHEBI:59789"/>
    </ligand>
</feature>
<feature type="binding site" evidence="1">
    <location>
        <begin position="127"/>
        <end position="132"/>
    </location>
    <ligand>
        <name>S-adenosyl-L-methionine</name>
        <dbReference type="ChEBI" id="CHEBI:59789"/>
    </ligand>
</feature>
<gene>
    <name evidence="1" type="primary">rlmH</name>
    <name type="ordered locus">SAG2173</name>
</gene>
<name>RLMH_STRA5</name>